<comment type="catalytic activity">
    <reaction evidence="1">
        <text>tRNA(Leu) + L-leucine + ATP = L-leucyl-tRNA(Leu) + AMP + diphosphate</text>
        <dbReference type="Rhea" id="RHEA:11688"/>
        <dbReference type="Rhea" id="RHEA-COMP:9613"/>
        <dbReference type="Rhea" id="RHEA-COMP:9622"/>
        <dbReference type="ChEBI" id="CHEBI:30616"/>
        <dbReference type="ChEBI" id="CHEBI:33019"/>
        <dbReference type="ChEBI" id="CHEBI:57427"/>
        <dbReference type="ChEBI" id="CHEBI:78442"/>
        <dbReference type="ChEBI" id="CHEBI:78494"/>
        <dbReference type="ChEBI" id="CHEBI:456215"/>
        <dbReference type="EC" id="6.1.1.4"/>
    </reaction>
</comment>
<comment type="subcellular location">
    <subcellularLocation>
        <location evidence="1">Cytoplasm</location>
    </subcellularLocation>
</comment>
<comment type="similarity">
    <text evidence="1">Belongs to the class-I aminoacyl-tRNA synthetase family.</text>
</comment>
<reference key="1">
    <citation type="journal article" date="2005" name="Nat. Biotechnol.">
        <title>The genome sequence of the ethanologenic bacterium Zymomonas mobilis ZM4.</title>
        <authorList>
            <person name="Seo J.-S."/>
            <person name="Chong H."/>
            <person name="Park H.S."/>
            <person name="Yoon K.-O."/>
            <person name="Jung C."/>
            <person name="Kim J.J."/>
            <person name="Hong J.H."/>
            <person name="Kim H."/>
            <person name="Kim J.-H."/>
            <person name="Kil J.-I."/>
            <person name="Park C.J."/>
            <person name="Oh H.-M."/>
            <person name="Lee J.-S."/>
            <person name="Jin S.-J."/>
            <person name="Um H.-W."/>
            <person name="Lee H.-J."/>
            <person name="Oh S.-J."/>
            <person name="Kim J.Y."/>
            <person name="Kang H.L."/>
            <person name="Lee S.Y."/>
            <person name="Lee K.J."/>
            <person name="Kang H.S."/>
        </authorList>
    </citation>
    <scope>NUCLEOTIDE SEQUENCE [LARGE SCALE GENOMIC DNA]</scope>
    <source>
        <strain>ATCC 31821 / ZM4 / CP4</strain>
    </source>
</reference>
<evidence type="ECO:0000255" key="1">
    <source>
        <dbReference type="HAMAP-Rule" id="MF_00049"/>
    </source>
</evidence>
<proteinExistence type="inferred from homology"/>
<accession>Q5NMK1</accession>
<gene>
    <name evidence="1" type="primary">leuS</name>
    <name type="ordered locus">ZMO1435</name>
</gene>
<keyword id="KW-0030">Aminoacyl-tRNA synthetase</keyword>
<keyword id="KW-0067">ATP-binding</keyword>
<keyword id="KW-0963">Cytoplasm</keyword>
<keyword id="KW-0436">Ligase</keyword>
<keyword id="KW-0547">Nucleotide-binding</keyword>
<keyword id="KW-0648">Protein biosynthesis</keyword>
<keyword id="KW-1185">Reference proteome</keyword>
<protein>
    <recommendedName>
        <fullName evidence="1">Leucine--tRNA ligase</fullName>
        <ecNumber evidence="1">6.1.1.4</ecNumber>
    </recommendedName>
    <alternativeName>
        <fullName evidence="1">Leucyl-tRNA synthetase</fullName>
        <shortName evidence="1">LeuRS</shortName>
    </alternativeName>
</protein>
<sequence>MSESGFSQRFNPHVVDGRWQKKWEESGCFHAKDNSDRPHSYILEMFPYPSGRIHMGHVRNYTMGDVLARYYRMKGHEVLHPMGWDAFGMPAENAAMERKIHPREWTMSNIATMREQLKRIGFAIDWSRELATCEPSYYGQEQALFLDLYKAGLVYRKESAVNWDPIDNTVLANEQVIDGRGWRSGALVERKKLNQWFLKITEFADDLLDGLKDLDQWPEKVRSMQENWIGRSQGMQFHFNFEVAPEGFDKIEVFTTRPDTLFGASFVAIACDHPIAKALAEKNAALPEFIADCQKMGTAAEDIETAEKKGFDTGLSLVHPLNPELKLPLFVANFVLMDYGTGAVFGCPAHDQRDLDFALKYNLPVKRVVAPSEAESNEAIGDKADTRAGIMVNSSFLDGLSSEEAKKTVIARAEKEGWGKGTTVFRLRDWGVSRQRYWGTPIPIIHCDSCGAVPVPKDQLPVTLPDDINFDKPGNPLERHPTWKNVTCPKCGKPARRETDTLDTFVDSSWYFIRFASQPDDKPFDKATAEKWLPVGQYIGGVEHAILHLLYARFWTRALQSIGRLDIKEPFTGLFTQGMVTHETYKDPEGHWLSPEQIHKDEAGIFLTESGEKVTVGRVEKMSKSKKNVVEPAPILDQYGADAVRWFMLSDSPPERDLAWTEAGIEGCWRFMQRLWRVAAIASEEASAGIDKDLQHRLHCSIKEVGEAIEGLSFNKAIAKIHDLVNAIEKAKASATRKEAALTLFRLVAPMVPHLSEEAWHLLEKEGFVAEASWPEFDPALTVEDEITIAVQVNGKLRDTLTVARDMPKDEAEKLALASEKVIKMLEGRSPKKVIVVPNRLVNIVA</sequence>
<feature type="chain" id="PRO_0000152126" description="Leucine--tRNA ligase">
    <location>
        <begin position="1"/>
        <end position="846"/>
    </location>
</feature>
<feature type="short sequence motif" description="'HIGH' region">
    <location>
        <begin position="47"/>
        <end position="57"/>
    </location>
</feature>
<feature type="short sequence motif" description="'KMSKS' region">
    <location>
        <begin position="621"/>
        <end position="625"/>
    </location>
</feature>
<feature type="binding site" evidence="1">
    <location>
        <position position="624"/>
    </location>
    <ligand>
        <name>ATP</name>
        <dbReference type="ChEBI" id="CHEBI:30616"/>
    </ligand>
</feature>
<name>SYL_ZYMMO</name>
<dbReference type="EC" id="6.1.1.4" evidence="1"/>
<dbReference type="EMBL" id="AE008692">
    <property type="protein sequence ID" value="AAV90059.1"/>
    <property type="molecule type" value="Genomic_DNA"/>
</dbReference>
<dbReference type="RefSeq" id="WP_011241216.1">
    <property type="nucleotide sequence ID" value="NZ_CP035711.1"/>
</dbReference>
<dbReference type="SMR" id="Q5NMK1"/>
<dbReference type="STRING" id="264203.ZMO1435"/>
<dbReference type="KEGG" id="zmo:ZMO1435"/>
<dbReference type="eggNOG" id="COG0495">
    <property type="taxonomic scope" value="Bacteria"/>
</dbReference>
<dbReference type="HOGENOM" id="CLU_004427_0_0_5"/>
<dbReference type="Proteomes" id="UP000001173">
    <property type="component" value="Chromosome"/>
</dbReference>
<dbReference type="GO" id="GO:0005829">
    <property type="term" value="C:cytosol"/>
    <property type="evidence" value="ECO:0007669"/>
    <property type="project" value="TreeGrafter"/>
</dbReference>
<dbReference type="GO" id="GO:0002161">
    <property type="term" value="F:aminoacyl-tRNA deacylase activity"/>
    <property type="evidence" value="ECO:0007669"/>
    <property type="project" value="InterPro"/>
</dbReference>
<dbReference type="GO" id="GO:0005524">
    <property type="term" value="F:ATP binding"/>
    <property type="evidence" value="ECO:0007669"/>
    <property type="project" value="UniProtKB-UniRule"/>
</dbReference>
<dbReference type="GO" id="GO:0004823">
    <property type="term" value="F:leucine-tRNA ligase activity"/>
    <property type="evidence" value="ECO:0007669"/>
    <property type="project" value="UniProtKB-UniRule"/>
</dbReference>
<dbReference type="GO" id="GO:0006429">
    <property type="term" value="P:leucyl-tRNA aminoacylation"/>
    <property type="evidence" value="ECO:0007669"/>
    <property type="project" value="UniProtKB-UniRule"/>
</dbReference>
<dbReference type="CDD" id="cd07958">
    <property type="entry name" value="Anticodon_Ia_Leu_BEm"/>
    <property type="match status" value="1"/>
</dbReference>
<dbReference type="CDD" id="cd00812">
    <property type="entry name" value="LeuRS_core"/>
    <property type="match status" value="1"/>
</dbReference>
<dbReference type="FunFam" id="1.10.730.10:FF:000002">
    <property type="entry name" value="Leucine--tRNA ligase"/>
    <property type="match status" value="1"/>
</dbReference>
<dbReference type="FunFam" id="3.10.20.590:FF:000001">
    <property type="entry name" value="Leucine--tRNA ligase"/>
    <property type="match status" value="1"/>
</dbReference>
<dbReference type="FunFam" id="3.40.50.620:FF:000003">
    <property type="entry name" value="Leucine--tRNA ligase"/>
    <property type="match status" value="1"/>
</dbReference>
<dbReference type="FunFam" id="3.40.50.620:FF:000056">
    <property type="entry name" value="Leucine--tRNA ligase"/>
    <property type="match status" value="1"/>
</dbReference>
<dbReference type="Gene3D" id="2.20.28.290">
    <property type="match status" value="1"/>
</dbReference>
<dbReference type="Gene3D" id="3.10.20.590">
    <property type="match status" value="1"/>
</dbReference>
<dbReference type="Gene3D" id="3.40.50.620">
    <property type="entry name" value="HUPs"/>
    <property type="match status" value="2"/>
</dbReference>
<dbReference type="Gene3D" id="1.10.730.10">
    <property type="entry name" value="Isoleucyl-tRNA Synthetase, Domain 1"/>
    <property type="match status" value="1"/>
</dbReference>
<dbReference type="HAMAP" id="MF_00049_B">
    <property type="entry name" value="Leu_tRNA_synth_B"/>
    <property type="match status" value="1"/>
</dbReference>
<dbReference type="InterPro" id="IPR001412">
    <property type="entry name" value="aa-tRNA-synth_I_CS"/>
</dbReference>
<dbReference type="InterPro" id="IPR002300">
    <property type="entry name" value="aa-tRNA-synth_Ia"/>
</dbReference>
<dbReference type="InterPro" id="IPR002302">
    <property type="entry name" value="Leu-tRNA-ligase"/>
</dbReference>
<dbReference type="InterPro" id="IPR025709">
    <property type="entry name" value="Leu_tRNA-synth_edit"/>
</dbReference>
<dbReference type="InterPro" id="IPR013155">
    <property type="entry name" value="M/V/L/I-tRNA-synth_anticd-bd"/>
</dbReference>
<dbReference type="InterPro" id="IPR015413">
    <property type="entry name" value="Methionyl/Leucyl_tRNA_Synth"/>
</dbReference>
<dbReference type="InterPro" id="IPR014729">
    <property type="entry name" value="Rossmann-like_a/b/a_fold"/>
</dbReference>
<dbReference type="InterPro" id="IPR009080">
    <property type="entry name" value="tRNAsynth_Ia_anticodon-bd"/>
</dbReference>
<dbReference type="InterPro" id="IPR009008">
    <property type="entry name" value="Val/Leu/Ile-tRNA-synth_edit"/>
</dbReference>
<dbReference type="NCBIfam" id="TIGR00396">
    <property type="entry name" value="leuS_bact"/>
    <property type="match status" value="1"/>
</dbReference>
<dbReference type="PANTHER" id="PTHR43740:SF2">
    <property type="entry name" value="LEUCINE--TRNA LIGASE, MITOCHONDRIAL"/>
    <property type="match status" value="1"/>
</dbReference>
<dbReference type="PANTHER" id="PTHR43740">
    <property type="entry name" value="LEUCYL-TRNA SYNTHETASE"/>
    <property type="match status" value="1"/>
</dbReference>
<dbReference type="Pfam" id="PF08264">
    <property type="entry name" value="Anticodon_1"/>
    <property type="match status" value="1"/>
</dbReference>
<dbReference type="Pfam" id="PF00133">
    <property type="entry name" value="tRNA-synt_1"/>
    <property type="match status" value="2"/>
</dbReference>
<dbReference type="Pfam" id="PF13603">
    <property type="entry name" value="tRNA-synt_1_2"/>
    <property type="match status" value="1"/>
</dbReference>
<dbReference type="Pfam" id="PF09334">
    <property type="entry name" value="tRNA-synt_1g"/>
    <property type="match status" value="1"/>
</dbReference>
<dbReference type="PRINTS" id="PR00985">
    <property type="entry name" value="TRNASYNTHLEU"/>
</dbReference>
<dbReference type="SUPFAM" id="SSF47323">
    <property type="entry name" value="Anticodon-binding domain of a subclass of class I aminoacyl-tRNA synthetases"/>
    <property type="match status" value="1"/>
</dbReference>
<dbReference type="SUPFAM" id="SSF52374">
    <property type="entry name" value="Nucleotidylyl transferase"/>
    <property type="match status" value="1"/>
</dbReference>
<dbReference type="SUPFAM" id="SSF50677">
    <property type="entry name" value="ValRS/IleRS/LeuRS editing domain"/>
    <property type="match status" value="1"/>
</dbReference>
<dbReference type="PROSITE" id="PS00178">
    <property type="entry name" value="AA_TRNA_LIGASE_I"/>
    <property type="match status" value="1"/>
</dbReference>
<organism>
    <name type="scientific">Zymomonas mobilis subsp. mobilis (strain ATCC 31821 / ZM4 / CP4)</name>
    <dbReference type="NCBI Taxonomy" id="264203"/>
    <lineage>
        <taxon>Bacteria</taxon>
        <taxon>Pseudomonadati</taxon>
        <taxon>Pseudomonadota</taxon>
        <taxon>Alphaproteobacteria</taxon>
        <taxon>Sphingomonadales</taxon>
        <taxon>Zymomonadaceae</taxon>
        <taxon>Zymomonas</taxon>
    </lineage>
</organism>